<gene>
    <name evidence="1" type="primary">pstB</name>
    <name type="ordered locus">Cj0616</name>
</gene>
<comment type="function">
    <text evidence="1">Part of the ABC transporter complex PstSACB involved in phosphate import. Responsible for energy coupling to the transport system.</text>
</comment>
<comment type="catalytic activity">
    <reaction evidence="1">
        <text>phosphate(out) + ATP + H2O = ADP + 2 phosphate(in) + H(+)</text>
        <dbReference type="Rhea" id="RHEA:24440"/>
        <dbReference type="ChEBI" id="CHEBI:15377"/>
        <dbReference type="ChEBI" id="CHEBI:15378"/>
        <dbReference type="ChEBI" id="CHEBI:30616"/>
        <dbReference type="ChEBI" id="CHEBI:43474"/>
        <dbReference type="ChEBI" id="CHEBI:456216"/>
        <dbReference type="EC" id="7.3.2.1"/>
    </reaction>
</comment>
<comment type="subunit">
    <text evidence="1">The complex is composed of two ATP-binding proteins (PstB), two transmembrane proteins (PstC and PstA) and a solute-binding protein (PstS).</text>
</comment>
<comment type="subcellular location">
    <subcellularLocation>
        <location evidence="1">Cell inner membrane</location>
        <topology evidence="1">Peripheral membrane protein</topology>
    </subcellularLocation>
</comment>
<comment type="similarity">
    <text evidence="1">Belongs to the ABC transporter superfamily. Phosphate importer (TC 3.A.1.7) family.</text>
</comment>
<protein>
    <recommendedName>
        <fullName evidence="1">Phosphate import ATP-binding protein PstB</fullName>
        <ecNumber evidence="1">7.3.2.1</ecNumber>
    </recommendedName>
    <alternativeName>
        <fullName evidence="1">ABC phosphate transporter</fullName>
    </alternativeName>
    <alternativeName>
        <fullName evidence="1">Phosphate-transporting ATPase</fullName>
    </alternativeName>
</protein>
<keyword id="KW-0067">ATP-binding</keyword>
<keyword id="KW-0997">Cell inner membrane</keyword>
<keyword id="KW-1003">Cell membrane</keyword>
<keyword id="KW-0472">Membrane</keyword>
<keyword id="KW-0547">Nucleotide-binding</keyword>
<keyword id="KW-0592">Phosphate transport</keyword>
<keyword id="KW-1185">Reference proteome</keyword>
<keyword id="KW-1278">Translocase</keyword>
<keyword id="KW-0813">Transport</keyword>
<proteinExistence type="inferred from homology"/>
<sequence length="246" mass="27516">MIAKTTNLNLFYGKKQALFDINMQIEQNKITALIGASGCGKSTFLRCFNRMNDKIAKIDGLVEIKGKDVKNQDVVALRKNVGMVFQQPNVFVKSIYENISYAPKLHGMIKNKDEEEALVVDCLQKVGLFEEVKDKLKQNALALSGGQQQRLCIARALAIKPKLLLLDEPTSALDPISSGVIEELLKELSHNLSMIMVTHNMQQGKRVADYTAFFHLGELIEFGESKEFFENPKQEKTKAYLSGAFG</sequence>
<reference key="1">
    <citation type="journal article" date="2000" name="Nature">
        <title>The genome sequence of the food-borne pathogen Campylobacter jejuni reveals hypervariable sequences.</title>
        <authorList>
            <person name="Parkhill J."/>
            <person name="Wren B.W."/>
            <person name="Mungall K.L."/>
            <person name="Ketley J.M."/>
            <person name="Churcher C.M."/>
            <person name="Basham D."/>
            <person name="Chillingworth T."/>
            <person name="Davies R.M."/>
            <person name="Feltwell T."/>
            <person name="Holroyd S."/>
            <person name="Jagels K."/>
            <person name="Karlyshev A.V."/>
            <person name="Moule S."/>
            <person name="Pallen M.J."/>
            <person name="Penn C.W."/>
            <person name="Quail M.A."/>
            <person name="Rajandream M.A."/>
            <person name="Rutherford K.M."/>
            <person name="van Vliet A.H.M."/>
            <person name="Whitehead S."/>
            <person name="Barrell B.G."/>
        </authorList>
    </citation>
    <scope>NUCLEOTIDE SEQUENCE [LARGE SCALE GENOMIC DNA]</scope>
    <source>
        <strain>ATCC 700819 / NCTC 11168</strain>
    </source>
</reference>
<feature type="chain" id="PRO_0000092798" description="Phosphate import ATP-binding protein PstB">
    <location>
        <begin position="1"/>
        <end position="246"/>
    </location>
</feature>
<feature type="domain" description="ABC transporter" evidence="1">
    <location>
        <begin position="3"/>
        <end position="241"/>
    </location>
</feature>
<feature type="binding site" evidence="1">
    <location>
        <begin position="35"/>
        <end position="42"/>
    </location>
    <ligand>
        <name>ATP</name>
        <dbReference type="ChEBI" id="CHEBI:30616"/>
    </ligand>
</feature>
<dbReference type="EC" id="7.3.2.1" evidence="1"/>
<dbReference type="EMBL" id="AL111168">
    <property type="protein sequence ID" value="CAL34762.1"/>
    <property type="molecule type" value="Genomic_DNA"/>
</dbReference>
<dbReference type="PIR" id="G81409">
    <property type="entry name" value="G81409"/>
</dbReference>
<dbReference type="RefSeq" id="WP_010891867.1">
    <property type="nucleotide sequence ID" value="NZ_SZUC01000002.1"/>
</dbReference>
<dbReference type="RefSeq" id="YP_002344046.1">
    <property type="nucleotide sequence ID" value="NC_002163.1"/>
</dbReference>
<dbReference type="SMR" id="Q9PHQ1"/>
<dbReference type="IntAct" id="Q9PHQ1">
    <property type="interactions" value="1"/>
</dbReference>
<dbReference type="STRING" id="192222.Cj0616"/>
<dbReference type="PaxDb" id="192222-Cj0616"/>
<dbReference type="EnsemblBacteria" id="CAL34762">
    <property type="protein sequence ID" value="CAL34762"/>
    <property type="gene ID" value="Cj0616"/>
</dbReference>
<dbReference type="GeneID" id="904943"/>
<dbReference type="KEGG" id="cje:Cj0616"/>
<dbReference type="PATRIC" id="fig|192222.6.peg.608"/>
<dbReference type="eggNOG" id="COG1117">
    <property type="taxonomic scope" value="Bacteria"/>
</dbReference>
<dbReference type="HOGENOM" id="CLU_000604_1_22_7"/>
<dbReference type="OrthoDB" id="9814623at2"/>
<dbReference type="Proteomes" id="UP000000799">
    <property type="component" value="Chromosome"/>
</dbReference>
<dbReference type="GO" id="GO:0005886">
    <property type="term" value="C:plasma membrane"/>
    <property type="evidence" value="ECO:0007669"/>
    <property type="project" value="UniProtKB-SubCell"/>
</dbReference>
<dbReference type="GO" id="GO:0005524">
    <property type="term" value="F:ATP binding"/>
    <property type="evidence" value="ECO:0007669"/>
    <property type="project" value="UniProtKB-KW"/>
</dbReference>
<dbReference type="GO" id="GO:0016887">
    <property type="term" value="F:ATP hydrolysis activity"/>
    <property type="evidence" value="ECO:0007669"/>
    <property type="project" value="InterPro"/>
</dbReference>
<dbReference type="GO" id="GO:0015415">
    <property type="term" value="F:ATPase-coupled phosphate ion transmembrane transporter activity"/>
    <property type="evidence" value="ECO:0007669"/>
    <property type="project" value="UniProtKB-EC"/>
</dbReference>
<dbReference type="GO" id="GO:0035435">
    <property type="term" value="P:phosphate ion transmembrane transport"/>
    <property type="evidence" value="ECO:0007669"/>
    <property type="project" value="InterPro"/>
</dbReference>
<dbReference type="CDD" id="cd03260">
    <property type="entry name" value="ABC_PstB_phosphate_transporter"/>
    <property type="match status" value="1"/>
</dbReference>
<dbReference type="Gene3D" id="3.40.50.300">
    <property type="entry name" value="P-loop containing nucleotide triphosphate hydrolases"/>
    <property type="match status" value="1"/>
</dbReference>
<dbReference type="InterPro" id="IPR003593">
    <property type="entry name" value="AAA+_ATPase"/>
</dbReference>
<dbReference type="InterPro" id="IPR003439">
    <property type="entry name" value="ABC_transporter-like_ATP-bd"/>
</dbReference>
<dbReference type="InterPro" id="IPR017871">
    <property type="entry name" value="ABC_transporter-like_CS"/>
</dbReference>
<dbReference type="InterPro" id="IPR027417">
    <property type="entry name" value="P-loop_NTPase"/>
</dbReference>
<dbReference type="InterPro" id="IPR005670">
    <property type="entry name" value="PstB-like"/>
</dbReference>
<dbReference type="NCBIfam" id="TIGR00972">
    <property type="entry name" value="3a0107s01c2"/>
    <property type="match status" value="1"/>
</dbReference>
<dbReference type="PANTHER" id="PTHR43423">
    <property type="entry name" value="ABC TRANSPORTER I FAMILY MEMBER 17"/>
    <property type="match status" value="1"/>
</dbReference>
<dbReference type="PANTHER" id="PTHR43423:SF1">
    <property type="entry name" value="ABC TRANSPORTER I FAMILY MEMBER 17"/>
    <property type="match status" value="1"/>
</dbReference>
<dbReference type="Pfam" id="PF00005">
    <property type="entry name" value="ABC_tran"/>
    <property type="match status" value="1"/>
</dbReference>
<dbReference type="SMART" id="SM00382">
    <property type="entry name" value="AAA"/>
    <property type="match status" value="1"/>
</dbReference>
<dbReference type="SUPFAM" id="SSF52540">
    <property type="entry name" value="P-loop containing nucleoside triphosphate hydrolases"/>
    <property type="match status" value="1"/>
</dbReference>
<dbReference type="PROSITE" id="PS00211">
    <property type="entry name" value="ABC_TRANSPORTER_1"/>
    <property type="match status" value="1"/>
</dbReference>
<dbReference type="PROSITE" id="PS50893">
    <property type="entry name" value="ABC_TRANSPORTER_2"/>
    <property type="match status" value="1"/>
</dbReference>
<dbReference type="PROSITE" id="PS51238">
    <property type="entry name" value="PSTB"/>
    <property type="match status" value="1"/>
</dbReference>
<evidence type="ECO:0000255" key="1">
    <source>
        <dbReference type="HAMAP-Rule" id="MF_01702"/>
    </source>
</evidence>
<name>PSTB_CAMJE</name>
<organism>
    <name type="scientific">Campylobacter jejuni subsp. jejuni serotype O:2 (strain ATCC 700819 / NCTC 11168)</name>
    <dbReference type="NCBI Taxonomy" id="192222"/>
    <lineage>
        <taxon>Bacteria</taxon>
        <taxon>Pseudomonadati</taxon>
        <taxon>Campylobacterota</taxon>
        <taxon>Epsilonproteobacteria</taxon>
        <taxon>Campylobacterales</taxon>
        <taxon>Campylobacteraceae</taxon>
        <taxon>Campylobacter</taxon>
    </lineage>
</organism>
<accession>Q9PHQ1</accession>
<accession>Q0PAQ1</accession>